<reference key="1">
    <citation type="journal article" date="1998" name="Nucleic Acids Res.">
        <title>The complete DNA sequence and analysis of the large virulence plasmid of Escherichia coli O157:H7.</title>
        <authorList>
            <person name="Burland V."/>
            <person name="Shao Y."/>
            <person name="Perna N.T."/>
            <person name="Plunkett G. III"/>
            <person name="Sofia H.J."/>
            <person name="Blattner F.R."/>
        </authorList>
    </citation>
    <scope>NUCLEOTIDE SEQUENCE [LARGE SCALE GENOMIC DNA]</scope>
    <source>
        <strain>O157:H7 / EDL933 / ATCC 700927 / EHEC</strain>
    </source>
</reference>
<reference key="2">
    <citation type="journal article" date="1998" name="DNA Res.">
        <title>Complete nucleotide sequences of 93-kb and 3.3-kb plasmids of an enterohemorrhagic Escherichia coli O157:H7 derived from Sakai outbreak.</title>
        <authorList>
            <person name="Makino K."/>
            <person name="Ishii K."/>
            <person name="Yasunaga T."/>
            <person name="Hattori M."/>
            <person name="Yokoyama K."/>
            <person name="Yatsudo H.C."/>
            <person name="Kubota Y."/>
            <person name="Yamaichi Y."/>
            <person name="Iida T."/>
            <person name="Yamamoto K."/>
            <person name="Honda T."/>
            <person name="Han C.G."/>
            <person name="Ohtsubo A."/>
            <person name="Kasamatsu M."/>
            <person name="Hayashi T."/>
            <person name="Kuhara S."/>
            <person name="Shinagawa H."/>
        </authorList>
    </citation>
    <scope>NUCLEOTIDE SEQUENCE [LARGE SCALE GENOMIC DNA]</scope>
    <source>
        <strain>O157:H7 / Sakai / RIMD 0509952 / EHEC</strain>
    </source>
</reference>
<evidence type="ECO:0000305" key="1"/>
<dbReference type="EMBL" id="AF074613">
    <property type="protein sequence ID" value="AAC70143.1"/>
    <property type="status" value="ALT_INIT"/>
    <property type="molecule type" value="Genomic_DNA"/>
</dbReference>
<dbReference type="EMBL" id="AB011549">
    <property type="protein sequence ID" value="BAA31796.1"/>
    <property type="status" value="ALT_INIT"/>
    <property type="molecule type" value="Genomic_DNA"/>
</dbReference>
<dbReference type="PIR" id="T00277">
    <property type="entry name" value="T00277"/>
</dbReference>
<dbReference type="RefSeq" id="NP_052646.1">
    <property type="nucleotide sequence ID" value="NC_002128.1"/>
</dbReference>
<dbReference type="KEGG" id="ece:Z_L7075"/>
<dbReference type="KEGG" id="ecs:pO157p39"/>
<dbReference type="PATRIC" id="fig|386585.9.peg.46"/>
<dbReference type="eggNOG" id="ENOG5032F0T">
    <property type="taxonomic scope" value="Bacteria"/>
</dbReference>
<dbReference type="HOGENOM" id="CLU_125886_0_0_6"/>
<dbReference type="OMA" id="XAMEIIN"/>
<dbReference type="Proteomes" id="UP000000558">
    <property type="component" value="Plasmid pO157"/>
</dbReference>
<dbReference type="Proteomes" id="UP000002519">
    <property type="component" value="Plasmid pO157"/>
</dbReference>
<dbReference type="InterPro" id="IPR009811">
    <property type="entry name" value="DUF1380"/>
</dbReference>
<dbReference type="Pfam" id="PF07128">
    <property type="entry name" value="DUF1380"/>
    <property type="match status" value="1"/>
</dbReference>
<gene>
    <name type="primary">yubF</name>
    <name type="ordered locus">L7075</name>
    <name type="ordered locus">ECO57PM39</name>
</gene>
<accession>O82898</accession>
<accession>Q7BST7</accession>
<feature type="chain" id="PRO_0000262312" description="Uncharacterized protein YubF">
    <location>
        <begin position="1"/>
        <end position="144"/>
    </location>
</feature>
<comment type="sequence caution" evidence="1">
    <conflict type="erroneous initiation">
        <sequence resource="EMBL-CDS" id="AAC70143"/>
    </conflict>
</comment>
<comment type="sequence caution" evidence="1">
    <conflict type="erroneous initiation">
        <sequence resource="EMBL-CDS" id="BAA31796"/>
    </conflict>
</comment>
<proteinExistence type="predicted"/>
<geneLocation type="plasmid">
    <name>pO157</name>
</geneLocation>
<name>YUBF_ECO57</name>
<organism>
    <name type="scientific">Escherichia coli O157:H7</name>
    <dbReference type="NCBI Taxonomy" id="83334"/>
    <lineage>
        <taxon>Bacteria</taxon>
        <taxon>Pseudomonadati</taxon>
        <taxon>Pseudomonadota</taxon>
        <taxon>Gammaproteobacteria</taxon>
        <taxon>Enterobacterales</taxon>
        <taxon>Enterobacteriaceae</taxon>
        <taxon>Escherichia</taxon>
    </lineage>
</organism>
<keyword id="KW-0614">Plasmid</keyword>
<keyword id="KW-1185">Reference proteome</keyword>
<sequence>MYGTCETLCRELAAKYPGYTPLMLVIWSPEEIQALADGMDISLSDPEIRTVLARLEDIPEDQRIESGISSAAAMEIISNVSENRQVTVPAELLASLIQTAEQALWKREWAARDYGLAVPECVTRRQAVVNQARILLKNNTHENG</sequence>
<protein>
    <recommendedName>
        <fullName>Uncharacterized protein YubF</fullName>
    </recommendedName>
</protein>